<comment type="function">
    <text evidence="1">Synthesizes alpha-1,4-glucan chains using ADP-glucose.</text>
</comment>
<comment type="catalytic activity">
    <reaction evidence="1">
        <text>[(1-&gt;4)-alpha-D-glucosyl](n) + ADP-alpha-D-glucose = [(1-&gt;4)-alpha-D-glucosyl](n+1) + ADP + H(+)</text>
        <dbReference type="Rhea" id="RHEA:18189"/>
        <dbReference type="Rhea" id="RHEA-COMP:9584"/>
        <dbReference type="Rhea" id="RHEA-COMP:9587"/>
        <dbReference type="ChEBI" id="CHEBI:15378"/>
        <dbReference type="ChEBI" id="CHEBI:15444"/>
        <dbReference type="ChEBI" id="CHEBI:57498"/>
        <dbReference type="ChEBI" id="CHEBI:456216"/>
        <dbReference type="EC" id="2.4.1.21"/>
    </reaction>
</comment>
<comment type="pathway">
    <text evidence="1">Glycan biosynthesis; glycogen biosynthesis.</text>
</comment>
<comment type="similarity">
    <text evidence="1">Belongs to the glycosyltransferase 1 family. Bacterial/plant glycogen synthase subfamily.</text>
</comment>
<dbReference type="EC" id="2.4.1.21" evidence="1"/>
<dbReference type="EMBL" id="AE016853">
    <property type="protein sequence ID" value="AAO56612.1"/>
    <property type="molecule type" value="Genomic_DNA"/>
</dbReference>
<dbReference type="RefSeq" id="NP_792917.1">
    <property type="nucleotide sequence ID" value="NC_004578.1"/>
</dbReference>
<dbReference type="SMR" id="Q880M9"/>
<dbReference type="STRING" id="223283.PSPTO_3125"/>
<dbReference type="CAZy" id="GT5">
    <property type="family name" value="Glycosyltransferase Family 5"/>
</dbReference>
<dbReference type="KEGG" id="pst:PSPTO_3125"/>
<dbReference type="PATRIC" id="fig|223283.9.peg.3191"/>
<dbReference type="eggNOG" id="COG0297">
    <property type="taxonomic scope" value="Bacteria"/>
</dbReference>
<dbReference type="HOGENOM" id="CLU_009583_18_4_6"/>
<dbReference type="OrthoDB" id="9808590at2"/>
<dbReference type="PhylomeDB" id="Q880M9"/>
<dbReference type="UniPathway" id="UPA00164"/>
<dbReference type="Proteomes" id="UP000002515">
    <property type="component" value="Chromosome"/>
</dbReference>
<dbReference type="GO" id="GO:0009011">
    <property type="term" value="F:alpha-1,4-glucan glucosyltransferase (ADP-glucose donor) activity"/>
    <property type="evidence" value="ECO:0007669"/>
    <property type="project" value="UniProtKB-UniRule"/>
</dbReference>
<dbReference type="GO" id="GO:0004373">
    <property type="term" value="F:alpha-1,4-glucan glucosyltransferase (UDP-glucose donor) activity"/>
    <property type="evidence" value="ECO:0007669"/>
    <property type="project" value="InterPro"/>
</dbReference>
<dbReference type="GO" id="GO:0005978">
    <property type="term" value="P:glycogen biosynthetic process"/>
    <property type="evidence" value="ECO:0007669"/>
    <property type="project" value="UniProtKB-UniRule"/>
</dbReference>
<dbReference type="CDD" id="cd03791">
    <property type="entry name" value="GT5_Glycogen_synthase_DULL1-like"/>
    <property type="match status" value="1"/>
</dbReference>
<dbReference type="Gene3D" id="3.40.50.2000">
    <property type="entry name" value="Glycogen Phosphorylase B"/>
    <property type="match status" value="2"/>
</dbReference>
<dbReference type="HAMAP" id="MF_00484">
    <property type="entry name" value="Glycogen_synth"/>
    <property type="match status" value="1"/>
</dbReference>
<dbReference type="InterPro" id="IPR001296">
    <property type="entry name" value="Glyco_trans_1"/>
</dbReference>
<dbReference type="InterPro" id="IPR011835">
    <property type="entry name" value="GS/SS"/>
</dbReference>
<dbReference type="InterPro" id="IPR013534">
    <property type="entry name" value="Starch_synth_cat_dom"/>
</dbReference>
<dbReference type="NCBIfam" id="TIGR02095">
    <property type="entry name" value="glgA"/>
    <property type="match status" value="1"/>
</dbReference>
<dbReference type="NCBIfam" id="NF001899">
    <property type="entry name" value="PRK00654.1-2"/>
    <property type="match status" value="1"/>
</dbReference>
<dbReference type="NCBIfam" id="NF001901">
    <property type="entry name" value="PRK00654.1-5"/>
    <property type="match status" value="1"/>
</dbReference>
<dbReference type="PANTHER" id="PTHR45825:SF8">
    <property type="entry name" value="GLYCOGEN SYNTHASE"/>
    <property type="match status" value="1"/>
</dbReference>
<dbReference type="PANTHER" id="PTHR45825">
    <property type="entry name" value="GRANULE-BOUND STARCH SYNTHASE 1, CHLOROPLASTIC/AMYLOPLASTIC"/>
    <property type="match status" value="1"/>
</dbReference>
<dbReference type="Pfam" id="PF08323">
    <property type="entry name" value="Glyco_transf_5"/>
    <property type="match status" value="1"/>
</dbReference>
<dbReference type="Pfam" id="PF00534">
    <property type="entry name" value="Glycos_transf_1"/>
    <property type="match status" value="1"/>
</dbReference>
<dbReference type="SUPFAM" id="SSF53756">
    <property type="entry name" value="UDP-Glycosyltransferase/glycogen phosphorylase"/>
    <property type="match status" value="1"/>
</dbReference>
<sequence>MSQVNRRKVLFVTSELADLVKTGGLGDVSAALPRAMRHLHDVRVLIPGYPQVINSGNPIHIISQLGGHAALPPCKVGRMDMKDGLVIYVLICPELYEREGTPYADTNGRDWSDNHIRFARLGLAAAEFAAGEVKSQWCPELVHAHDWPAGLAPAYMRWRGQSTPSIFTVHNLAYQGTVSTASSRELGIPDEAITPEGMEFYGKLSFIKAGMAFANHITTVSATYAREITTPEFGCGLEGFLQSKADKGQLSGIPNGIDESWDAATDEHLICHFAPNEWTRKEINADYVRELFELDASSGPLYAVVSRLVYQKGLDLTIGVAEHIVNNGGQIAIIGRGEPEEEDAMRELAARFPGRIGVRIGFNETDARRMFAGSDFLLMPSRYEPCGLSQMYAQRFGSLPVARNTGGLADTIEDGVTGFLFNESTVESYTEALNRTFQVFAHPELLNAMRCRAMAAPFNWHQAVEPYAELYRDLLKKNVSMTSN</sequence>
<reference key="1">
    <citation type="journal article" date="2003" name="Proc. Natl. Acad. Sci. U.S.A.">
        <title>The complete genome sequence of the Arabidopsis and tomato pathogen Pseudomonas syringae pv. tomato DC3000.</title>
        <authorList>
            <person name="Buell C.R."/>
            <person name="Joardar V."/>
            <person name="Lindeberg M."/>
            <person name="Selengut J."/>
            <person name="Paulsen I.T."/>
            <person name="Gwinn M.L."/>
            <person name="Dodson R.J."/>
            <person name="DeBoy R.T."/>
            <person name="Durkin A.S."/>
            <person name="Kolonay J.F."/>
            <person name="Madupu R."/>
            <person name="Daugherty S.C."/>
            <person name="Brinkac L.M."/>
            <person name="Beanan M.J."/>
            <person name="Haft D.H."/>
            <person name="Nelson W.C."/>
            <person name="Davidsen T.M."/>
            <person name="Zafar N."/>
            <person name="Zhou L."/>
            <person name="Liu J."/>
            <person name="Yuan Q."/>
            <person name="Khouri H.M."/>
            <person name="Fedorova N.B."/>
            <person name="Tran B."/>
            <person name="Russell D."/>
            <person name="Berry K.J."/>
            <person name="Utterback T.R."/>
            <person name="Van Aken S.E."/>
            <person name="Feldblyum T.V."/>
            <person name="D'Ascenzo M."/>
            <person name="Deng W.-L."/>
            <person name="Ramos A.R."/>
            <person name="Alfano J.R."/>
            <person name="Cartinhour S."/>
            <person name="Chatterjee A.K."/>
            <person name="Delaney T.P."/>
            <person name="Lazarowitz S.G."/>
            <person name="Martin G.B."/>
            <person name="Schneider D.J."/>
            <person name="Tang X."/>
            <person name="Bender C.L."/>
            <person name="White O."/>
            <person name="Fraser C.M."/>
            <person name="Collmer A."/>
        </authorList>
    </citation>
    <scope>NUCLEOTIDE SEQUENCE [LARGE SCALE GENOMIC DNA]</scope>
    <source>
        <strain>ATCC BAA-871 / DC3000</strain>
    </source>
</reference>
<organism>
    <name type="scientific">Pseudomonas syringae pv. tomato (strain ATCC BAA-871 / DC3000)</name>
    <dbReference type="NCBI Taxonomy" id="223283"/>
    <lineage>
        <taxon>Bacteria</taxon>
        <taxon>Pseudomonadati</taxon>
        <taxon>Pseudomonadota</taxon>
        <taxon>Gammaproteobacteria</taxon>
        <taxon>Pseudomonadales</taxon>
        <taxon>Pseudomonadaceae</taxon>
        <taxon>Pseudomonas</taxon>
    </lineage>
</organism>
<proteinExistence type="inferred from homology"/>
<protein>
    <recommendedName>
        <fullName evidence="1">Glycogen synthase</fullName>
        <ecNumber evidence="1">2.4.1.21</ecNumber>
    </recommendedName>
    <alternativeName>
        <fullName evidence="1">Starch [bacterial glycogen] synthase</fullName>
    </alternativeName>
</protein>
<feature type="chain" id="PRO_0000188634" description="Glycogen synthase">
    <location>
        <begin position="1"/>
        <end position="484"/>
    </location>
</feature>
<feature type="binding site" evidence="1">
    <location>
        <position position="21"/>
    </location>
    <ligand>
        <name>ADP-alpha-D-glucose</name>
        <dbReference type="ChEBI" id="CHEBI:57498"/>
    </ligand>
</feature>
<evidence type="ECO:0000255" key="1">
    <source>
        <dbReference type="HAMAP-Rule" id="MF_00484"/>
    </source>
</evidence>
<accession>Q880M9</accession>
<keyword id="KW-0320">Glycogen biosynthesis</keyword>
<keyword id="KW-0328">Glycosyltransferase</keyword>
<keyword id="KW-1185">Reference proteome</keyword>
<keyword id="KW-0808">Transferase</keyword>
<name>GLGA_PSESM</name>
<gene>
    <name evidence="1" type="primary">glgA</name>
    <name type="ordered locus">PSPTO_3125</name>
</gene>